<feature type="chain" id="PRO_1000003530" description="Small ribosomal subunit protein bS18">
    <location>
        <begin position="1"/>
        <end position="79"/>
    </location>
</feature>
<proteinExistence type="inferred from homology"/>
<accession>A0AEM3</accession>
<sequence>MAGGRRGGRRRKKVCYFTSNGITHIDYKDVELLKKFVSERGKILPRRVTGTSAKYQRKLTVAIKRSRQMALLPFVAEEK</sequence>
<organism>
    <name type="scientific">Listeria welshimeri serovar 6b (strain ATCC 35897 / DSM 20650 / CCUG 15529 / CIP 8149 / NCTC 11857 / SLCC 5334 / V8)</name>
    <dbReference type="NCBI Taxonomy" id="386043"/>
    <lineage>
        <taxon>Bacteria</taxon>
        <taxon>Bacillati</taxon>
        <taxon>Bacillota</taxon>
        <taxon>Bacilli</taxon>
        <taxon>Bacillales</taxon>
        <taxon>Listeriaceae</taxon>
        <taxon>Listeria</taxon>
    </lineage>
</organism>
<dbReference type="EMBL" id="AM263198">
    <property type="protein sequence ID" value="CAK19455.1"/>
    <property type="molecule type" value="Genomic_DNA"/>
</dbReference>
<dbReference type="RefSeq" id="WP_003721669.1">
    <property type="nucleotide sequence ID" value="NC_008555.1"/>
</dbReference>
<dbReference type="SMR" id="A0AEM3"/>
<dbReference type="STRING" id="386043.lwe0037"/>
<dbReference type="GeneID" id="93237944"/>
<dbReference type="KEGG" id="lwe:lwe0037"/>
<dbReference type="eggNOG" id="COG0238">
    <property type="taxonomic scope" value="Bacteria"/>
</dbReference>
<dbReference type="HOGENOM" id="CLU_148710_2_2_9"/>
<dbReference type="OrthoDB" id="9812008at2"/>
<dbReference type="Proteomes" id="UP000000779">
    <property type="component" value="Chromosome"/>
</dbReference>
<dbReference type="GO" id="GO:0022627">
    <property type="term" value="C:cytosolic small ribosomal subunit"/>
    <property type="evidence" value="ECO:0007669"/>
    <property type="project" value="TreeGrafter"/>
</dbReference>
<dbReference type="GO" id="GO:0070181">
    <property type="term" value="F:small ribosomal subunit rRNA binding"/>
    <property type="evidence" value="ECO:0007669"/>
    <property type="project" value="TreeGrafter"/>
</dbReference>
<dbReference type="GO" id="GO:0003735">
    <property type="term" value="F:structural constituent of ribosome"/>
    <property type="evidence" value="ECO:0007669"/>
    <property type="project" value="InterPro"/>
</dbReference>
<dbReference type="GO" id="GO:0006412">
    <property type="term" value="P:translation"/>
    <property type="evidence" value="ECO:0007669"/>
    <property type="project" value="UniProtKB-UniRule"/>
</dbReference>
<dbReference type="FunFam" id="4.10.640.10:FF:000003">
    <property type="entry name" value="30S ribosomal protein S18"/>
    <property type="match status" value="1"/>
</dbReference>
<dbReference type="Gene3D" id="4.10.640.10">
    <property type="entry name" value="Ribosomal protein S18"/>
    <property type="match status" value="1"/>
</dbReference>
<dbReference type="HAMAP" id="MF_00270">
    <property type="entry name" value="Ribosomal_bS18"/>
    <property type="match status" value="1"/>
</dbReference>
<dbReference type="InterPro" id="IPR001648">
    <property type="entry name" value="Ribosomal_bS18"/>
</dbReference>
<dbReference type="InterPro" id="IPR018275">
    <property type="entry name" value="Ribosomal_bS18_CS"/>
</dbReference>
<dbReference type="InterPro" id="IPR036870">
    <property type="entry name" value="Ribosomal_bS18_sf"/>
</dbReference>
<dbReference type="NCBIfam" id="TIGR00165">
    <property type="entry name" value="S18"/>
    <property type="match status" value="1"/>
</dbReference>
<dbReference type="PANTHER" id="PTHR13479">
    <property type="entry name" value="30S RIBOSOMAL PROTEIN S18"/>
    <property type="match status" value="1"/>
</dbReference>
<dbReference type="PANTHER" id="PTHR13479:SF40">
    <property type="entry name" value="SMALL RIBOSOMAL SUBUNIT PROTEIN BS18M"/>
    <property type="match status" value="1"/>
</dbReference>
<dbReference type="Pfam" id="PF01084">
    <property type="entry name" value="Ribosomal_S18"/>
    <property type="match status" value="1"/>
</dbReference>
<dbReference type="PRINTS" id="PR00974">
    <property type="entry name" value="RIBOSOMALS18"/>
</dbReference>
<dbReference type="SUPFAM" id="SSF46911">
    <property type="entry name" value="Ribosomal protein S18"/>
    <property type="match status" value="1"/>
</dbReference>
<dbReference type="PROSITE" id="PS00057">
    <property type="entry name" value="RIBOSOMAL_S18"/>
    <property type="match status" value="1"/>
</dbReference>
<gene>
    <name evidence="1" type="primary">rpsR</name>
    <name type="ordered locus">lwe0037</name>
</gene>
<name>RS18_LISW6</name>
<reference key="1">
    <citation type="journal article" date="2006" name="J. Bacteriol.">
        <title>Whole-genome sequence of Listeria welshimeri reveals common steps in genome reduction with Listeria innocua as compared to Listeria monocytogenes.</title>
        <authorList>
            <person name="Hain T."/>
            <person name="Steinweg C."/>
            <person name="Kuenne C.T."/>
            <person name="Billion A."/>
            <person name="Ghai R."/>
            <person name="Chatterjee S.S."/>
            <person name="Domann E."/>
            <person name="Kaerst U."/>
            <person name="Goesmann A."/>
            <person name="Bekel T."/>
            <person name="Bartels D."/>
            <person name="Kaiser O."/>
            <person name="Meyer F."/>
            <person name="Puehler A."/>
            <person name="Weisshaar B."/>
            <person name="Wehland J."/>
            <person name="Liang C."/>
            <person name="Dandekar T."/>
            <person name="Lampidis R."/>
            <person name="Kreft J."/>
            <person name="Goebel W."/>
            <person name="Chakraborty T."/>
        </authorList>
    </citation>
    <scope>NUCLEOTIDE SEQUENCE [LARGE SCALE GENOMIC DNA]</scope>
    <source>
        <strain>ATCC 35897 / DSM 20650 / CCUG 15529 / CIP 8149 / NCTC 11857 / SLCC 5334 / V8</strain>
    </source>
</reference>
<keyword id="KW-0687">Ribonucleoprotein</keyword>
<keyword id="KW-0689">Ribosomal protein</keyword>
<keyword id="KW-0694">RNA-binding</keyword>
<keyword id="KW-0699">rRNA-binding</keyword>
<evidence type="ECO:0000255" key="1">
    <source>
        <dbReference type="HAMAP-Rule" id="MF_00270"/>
    </source>
</evidence>
<evidence type="ECO:0000305" key="2"/>
<comment type="function">
    <text evidence="1">Binds as a heterodimer with protein bS6 to the central domain of the 16S rRNA, where it helps stabilize the platform of the 30S subunit.</text>
</comment>
<comment type="subunit">
    <text evidence="1">Part of the 30S ribosomal subunit. Forms a tight heterodimer with protein bS6.</text>
</comment>
<comment type="similarity">
    <text evidence="1">Belongs to the bacterial ribosomal protein bS18 family.</text>
</comment>
<protein>
    <recommendedName>
        <fullName evidence="1">Small ribosomal subunit protein bS18</fullName>
    </recommendedName>
    <alternativeName>
        <fullName evidence="2">30S ribosomal protein S18</fullName>
    </alternativeName>
</protein>